<accession>O22043</accession>
<accession>Q9XIC0</accession>
<dbReference type="EC" id="2.5.1.-" evidence="6"/>
<dbReference type="EC" id="2.5.1.1"/>
<dbReference type="EC" id="2.5.1.29" evidence="6"/>
<dbReference type="EC" id="2.5.1.10"/>
<dbReference type="EMBL" id="AB000835">
    <property type="protein sequence ID" value="BAA23157.1"/>
    <property type="molecule type" value="Genomic_DNA"/>
</dbReference>
<dbReference type="EMBL" id="AC007504">
    <property type="protein sequence ID" value="AAD43148.1"/>
    <property type="molecule type" value="Genomic_DNA"/>
</dbReference>
<dbReference type="EMBL" id="CP002684">
    <property type="protein sequence ID" value="AEE32439.1"/>
    <property type="molecule type" value="Genomic_DNA"/>
</dbReference>
<dbReference type="EMBL" id="BT011230">
    <property type="protein sequence ID" value="AAR92266.1"/>
    <property type="molecule type" value="mRNA"/>
</dbReference>
<dbReference type="EMBL" id="BT012158">
    <property type="protein sequence ID" value="AAS76253.1"/>
    <property type="molecule type" value="mRNA"/>
</dbReference>
<dbReference type="SMR" id="O22043"/>
<dbReference type="FunCoup" id="O22043">
    <property type="interactions" value="16"/>
</dbReference>
<dbReference type="STRING" id="3702.O22043"/>
<dbReference type="PaxDb" id="3702-AT1G49530.1"/>
<dbReference type="ProteomicsDB" id="220745"/>
<dbReference type="EnsemblPlants" id="AT1G49530.1">
    <property type="protein sequence ID" value="AT1G49530.1"/>
    <property type="gene ID" value="AT1G49530"/>
</dbReference>
<dbReference type="Gramene" id="AT1G49530.1">
    <property type="protein sequence ID" value="AT1G49530.1"/>
    <property type="gene ID" value="AT1G49530"/>
</dbReference>
<dbReference type="KEGG" id="ath:AT1G49530"/>
<dbReference type="Araport" id="AT1G49530"/>
<dbReference type="TAIR" id="AT1G49530">
    <property type="gene designation" value="GGPS6"/>
</dbReference>
<dbReference type="eggNOG" id="KOG0776">
    <property type="taxonomic scope" value="Eukaryota"/>
</dbReference>
<dbReference type="HOGENOM" id="CLU_014015_0_0_1"/>
<dbReference type="InParanoid" id="O22043"/>
<dbReference type="OMA" id="TIPLCEP"/>
<dbReference type="PhylomeDB" id="O22043"/>
<dbReference type="BioCyc" id="MetaCyc:AT1G49530-MONOMER"/>
<dbReference type="UniPathway" id="UPA00259">
    <property type="reaction ID" value="UER00368"/>
</dbReference>
<dbReference type="UniPathway" id="UPA00260">
    <property type="reaction ID" value="UER00369"/>
</dbReference>
<dbReference type="UniPathway" id="UPA00389">
    <property type="reaction ID" value="UER00564"/>
</dbReference>
<dbReference type="PRO" id="PR:O22043"/>
<dbReference type="Proteomes" id="UP000006548">
    <property type="component" value="Chromosome 1"/>
</dbReference>
<dbReference type="ExpressionAtlas" id="O22043">
    <property type="expression patterns" value="baseline and differential"/>
</dbReference>
<dbReference type="GO" id="GO:0005739">
    <property type="term" value="C:mitochondrion"/>
    <property type="evidence" value="ECO:0000314"/>
    <property type="project" value="TAIR"/>
</dbReference>
<dbReference type="GO" id="GO:0004337">
    <property type="term" value="F:(2E,6E)-farnesyl diphosphate synthase activity"/>
    <property type="evidence" value="ECO:0007669"/>
    <property type="project" value="UniProtKB-EC"/>
</dbReference>
<dbReference type="GO" id="GO:0004161">
    <property type="term" value="F:dimethylallyltranstransferase activity"/>
    <property type="evidence" value="ECO:0007669"/>
    <property type="project" value="UniProtKB-EC"/>
</dbReference>
<dbReference type="GO" id="GO:0004311">
    <property type="term" value="F:geranylgeranyl diphosphate synthase activity"/>
    <property type="evidence" value="ECO:0000314"/>
    <property type="project" value="TAIR"/>
</dbReference>
<dbReference type="GO" id="GO:0046872">
    <property type="term" value="F:metal ion binding"/>
    <property type="evidence" value="ECO:0007669"/>
    <property type="project" value="UniProtKB-KW"/>
</dbReference>
<dbReference type="GO" id="GO:0016117">
    <property type="term" value="P:carotenoid biosynthetic process"/>
    <property type="evidence" value="ECO:0007669"/>
    <property type="project" value="UniProtKB-KW"/>
</dbReference>
<dbReference type="GO" id="GO:0045337">
    <property type="term" value="P:farnesyl diphosphate biosynthetic process"/>
    <property type="evidence" value="ECO:0007669"/>
    <property type="project" value="UniProtKB-UniPathway"/>
</dbReference>
<dbReference type="GO" id="GO:0033384">
    <property type="term" value="P:geranyl diphosphate biosynthetic process"/>
    <property type="evidence" value="ECO:0007669"/>
    <property type="project" value="UniProtKB-UniPathway"/>
</dbReference>
<dbReference type="GO" id="GO:0033386">
    <property type="term" value="P:geranylgeranyl diphosphate biosynthetic process"/>
    <property type="evidence" value="ECO:0007669"/>
    <property type="project" value="UniProtKB-UniPathway"/>
</dbReference>
<dbReference type="GO" id="GO:0008299">
    <property type="term" value="P:isoprenoid biosynthetic process"/>
    <property type="evidence" value="ECO:0000304"/>
    <property type="project" value="TAIR"/>
</dbReference>
<dbReference type="CDD" id="cd00685">
    <property type="entry name" value="Trans_IPPS_HT"/>
    <property type="match status" value="1"/>
</dbReference>
<dbReference type="FunFam" id="1.10.600.10:FF:000001">
    <property type="entry name" value="Geranylgeranyl diphosphate synthase"/>
    <property type="match status" value="1"/>
</dbReference>
<dbReference type="Gene3D" id="1.10.600.10">
    <property type="entry name" value="Farnesyl Diphosphate Synthase"/>
    <property type="match status" value="1"/>
</dbReference>
<dbReference type="InterPro" id="IPR008949">
    <property type="entry name" value="Isoprenoid_synthase_dom_sf"/>
</dbReference>
<dbReference type="InterPro" id="IPR000092">
    <property type="entry name" value="Polyprenyl_synt"/>
</dbReference>
<dbReference type="InterPro" id="IPR033749">
    <property type="entry name" value="Polyprenyl_synt_CS"/>
</dbReference>
<dbReference type="InterPro" id="IPR053378">
    <property type="entry name" value="Prenyl_diphosphate_synthase"/>
</dbReference>
<dbReference type="NCBIfam" id="NF045485">
    <property type="entry name" value="FPPsyn"/>
    <property type="match status" value="1"/>
</dbReference>
<dbReference type="PANTHER" id="PTHR43281">
    <property type="entry name" value="FARNESYL DIPHOSPHATE SYNTHASE"/>
    <property type="match status" value="1"/>
</dbReference>
<dbReference type="PANTHER" id="PTHR43281:SF22">
    <property type="entry name" value="GERANYLGERANYL PYROPHOSPHATE SYNTHASE 6, MITOCHONDRIAL"/>
    <property type="match status" value="1"/>
</dbReference>
<dbReference type="Pfam" id="PF00348">
    <property type="entry name" value="polyprenyl_synt"/>
    <property type="match status" value="1"/>
</dbReference>
<dbReference type="SFLD" id="SFLDS00005">
    <property type="entry name" value="Isoprenoid_Synthase_Type_I"/>
    <property type="match status" value="1"/>
</dbReference>
<dbReference type="SFLD" id="SFLDG01017">
    <property type="entry name" value="Polyprenyl_Transferase_Like"/>
    <property type="match status" value="1"/>
</dbReference>
<dbReference type="SUPFAM" id="SSF48576">
    <property type="entry name" value="Terpenoid synthases"/>
    <property type="match status" value="1"/>
</dbReference>
<dbReference type="PROSITE" id="PS00723">
    <property type="entry name" value="POLYPRENYL_SYNTHASE_1"/>
    <property type="match status" value="1"/>
</dbReference>
<dbReference type="PROSITE" id="PS00444">
    <property type="entry name" value="POLYPRENYL_SYNTHASE_2"/>
    <property type="match status" value="1"/>
</dbReference>
<evidence type="ECO:0000250" key="1"/>
<evidence type="ECO:0000250" key="2">
    <source>
        <dbReference type="UniProtKB" id="P14324"/>
    </source>
</evidence>
<evidence type="ECO:0000250" key="3">
    <source>
        <dbReference type="UniProtKB" id="Q12051"/>
    </source>
</evidence>
<evidence type="ECO:0000255" key="4"/>
<evidence type="ECO:0000269" key="5">
    <source>
    </source>
</evidence>
<evidence type="ECO:0000269" key="6">
    <source>
    </source>
</evidence>
<evidence type="ECO:0000303" key="7">
    <source>
    </source>
</evidence>
<evidence type="ECO:0000305" key="8"/>
<evidence type="ECO:0000312" key="9">
    <source>
        <dbReference type="Araport" id="AT1G49530"/>
    </source>
</evidence>
<evidence type="ECO:0000312" key="10">
    <source>
        <dbReference type="EMBL" id="AAD43148.1"/>
    </source>
</evidence>
<sequence length="336" mass="36886">MRPRYSLILSAMRLIRPSNRRLSSIASSDSEFISYMKNKAKSINKALDNSIPLCNNFVPLWEPVLEVHKAMRYTLLPGGKRVRPMLCLVACELVGGQESTAMPAACAVEMIHAASLILDDLPCMDDDSLRRGKPTNHKVFGEKTSILASNALRSLAVKQTLASTSLGVTSERVLRAVQEMARAVGTEGLVAGQAADLAGERMSFKNEDDELRYLELMHVHKTAVLVEAAAVVGAIMGGGSDEEIERLKSYARCVGLMFQVMDDVLDETKSSEELGKTAGKDLITGKLTYPKVMGVDNAREYAKRLNREAQEHLQGFDSDKVVPLLSLADYIVKRQN</sequence>
<organism>
    <name type="scientific">Arabidopsis thaliana</name>
    <name type="common">Mouse-ear cress</name>
    <dbReference type="NCBI Taxonomy" id="3702"/>
    <lineage>
        <taxon>Eukaryota</taxon>
        <taxon>Viridiplantae</taxon>
        <taxon>Streptophyta</taxon>
        <taxon>Embryophyta</taxon>
        <taxon>Tracheophyta</taxon>
        <taxon>Spermatophyta</taxon>
        <taxon>Magnoliopsida</taxon>
        <taxon>eudicotyledons</taxon>
        <taxon>Gunneridae</taxon>
        <taxon>Pentapetalae</taxon>
        <taxon>rosids</taxon>
        <taxon>malvids</taxon>
        <taxon>Brassicales</taxon>
        <taxon>Brassicaceae</taxon>
        <taxon>Camelineae</taxon>
        <taxon>Arabidopsis</taxon>
    </lineage>
</organism>
<protein>
    <recommendedName>
        <fullName evidence="7">Geranylgeranyl pyrophosphate synthase 6, mitochondrial</fullName>
        <shortName evidence="7">GGPP synthase 6</shortName>
        <shortName evidence="7">GGPS6</shortName>
        <ecNumber evidence="6">2.5.1.-</ecNumber>
    </recommendedName>
    <alternativeName>
        <fullName>(2E,6E)-farnesyl diphosphate synthase 6</fullName>
    </alternativeName>
    <alternativeName>
        <fullName>Dimethylallyltranstransferase 6</fullName>
        <ecNumber>2.5.1.1</ecNumber>
    </alternativeName>
    <alternativeName>
        <fullName>Farnesyl diphosphate synthase 6</fullName>
    </alternativeName>
    <alternativeName>
        <fullName>Farnesyltranstransferase 6</fullName>
        <ecNumber evidence="6">2.5.1.29</ecNumber>
    </alternativeName>
    <alternativeName>
        <fullName>Geranyltranstransferase 6</fullName>
        <ecNumber>2.5.1.10</ecNumber>
    </alternativeName>
</protein>
<keyword id="KW-0125">Carotenoid biosynthesis</keyword>
<keyword id="KW-0414">Isoprene biosynthesis</keyword>
<keyword id="KW-0460">Magnesium</keyword>
<keyword id="KW-0479">Metal-binding</keyword>
<keyword id="KW-0496">Mitochondrion</keyword>
<keyword id="KW-1185">Reference proteome</keyword>
<keyword id="KW-0808">Transferase</keyword>
<keyword id="KW-0809">Transit peptide</keyword>
<feature type="transit peptide" description="Mitochondrion" evidence="4">
    <location>
        <begin position="1"/>
        <end position="22"/>
    </location>
</feature>
<feature type="chain" id="PRO_0000045405" description="Geranylgeranyl pyrophosphate synthase 6, mitochondrial">
    <location>
        <begin position="23"/>
        <end position="336"/>
    </location>
</feature>
<feature type="binding site" evidence="2">
    <location>
        <position position="80"/>
    </location>
    <ligand>
        <name>isopentenyl diphosphate</name>
        <dbReference type="ChEBI" id="CHEBI:128769"/>
    </ligand>
</feature>
<feature type="binding site" evidence="2">
    <location>
        <position position="83"/>
    </location>
    <ligand>
        <name>isopentenyl diphosphate</name>
        <dbReference type="ChEBI" id="CHEBI:128769"/>
    </ligand>
</feature>
<feature type="binding site" evidence="3">
    <location>
        <position position="112"/>
    </location>
    <ligand>
        <name>isopentenyl diphosphate</name>
        <dbReference type="ChEBI" id="CHEBI:128769"/>
    </ligand>
</feature>
<feature type="binding site" evidence="2">
    <location>
        <position position="119"/>
    </location>
    <ligand>
        <name>Mg(2+)</name>
        <dbReference type="ChEBI" id="CHEBI:18420"/>
        <label>1</label>
    </ligand>
</feature>
<feature type="binding site" evidence="2">
    <location>
        <position position="119"/>
    </location>
    <ligand>
        <name>Mg(2+)</name>
        <dbReference type="ChEBI" id="CHEBI:18420"/>
        <label>2</label>
    </ligand>
</feature>
<feature type="binding site" evidence="2">
    <location>
        <position position="125"/>
    </location>
    <ligand>
        <name>Mg(2+)</name>
        <dbReference type="ChEBI" id="CHEBI:18420"/>
        <label>1</label>
    </ligand>
</feature>
<feature type="binding site" evidence="2">
    <location>
        <position position="125"/>
    </location>
    <ligand>
        <name>Mg(2+)</name>
        <dbReference type="ChEBI" id="CHEBI:18420"/>
        <label>2</label>
    </ligand>
</feature>
<feature type="binding site" evidence="1">
    <location>
        <position position="130"/>
    </location>
    <ligand>
        <name>dimethylallyl diphosphate</name>
        <dbReference type="ChEBI" id="CHEBI:57623"/>
    </ligand>
</feature>
<feature type="binding site" evidence="2">
    <location>
        <position position="131"/>
    </location>
    <ligand>
        <name>isopentenyl diphosphate</name>
        <dbReference type="ChEBI" id="CHEBI:128769"/>
    </ligand>
</feature>
<feature type="binding site" evidence="1">
    <location>
        <position position="221"/>
    </location>
    <ligand>
        <name>dimethylallyl diphosphate</name>
        <dbReference type="ChEBI" id="CHEBI:57623"/>
    </ligand>
</feature>
<feature type="binding site" evidence="1">
    <location>
        <position position="222"/>
    </location>
    <ligand>
        <name>dimethylallyl diphosphate</name>
        <dbReference type="ChEBI" id="CHEBI:57623"/>
    </ligand>
</feature>
<feature type="binding site" evidence="1">
    <location>
        <position position="259"/>
    </location>
    <ligand>
        <name>dimethylallyl diphosphate</name>
        <dbReference type="ChEBI" id="CHEBI:57623"/>
    </ligand>
</feature>
<feature type="binding site" evidence="1">
    <location>
        <position position="276"/>
    </location>
    <ligand>
        <name>dimethylallyl diphosphate</name>
        <dbReference type="ChEBI" id="CHEBI:57623"/>
    </ligand>
</feature>
<feature type="binding site" evidence="1">
    <location>
        <position position="286"/>
    </location>
    <ligand>
        <name>dimethylallyl diphosphate</name>
        <dbReference type="ChEBI" id="CHEBI:57623"/>
    </ligand>
</feature>
<feature type="sequence conflict" description="In Ref. 1 and 2." evidence="8" ref="1 2">
    <original>M</original>
    <variation>MLCKIIIM</variation>
    <location>
        <position position="1"/>
    </location>
</feature>
<feature type="sequence conflict" description="In Ref. 1 and 2." evidence="8" ref="1 2">
    <original>R</original>
    <variation>C</variation>
    <location>
        <position position="4"/>
    </location>
</feature>
<feature type="sequence conflict" description="In Ref. 1 and 2." evidence="8" ref="1 2">
    <original>I</original>
    <variation>V</variation>
    <location>
        <position position="8"/>
    </location>
</feature>
<feature type="sequence conflict" description="In Ref. 1 and 2." evidence="8" ref="1 2">
    <original>K</original>
    <variation>N</variation>
    <location>
        <position position="37"/>
    </location>
</feature>
<feature type="sequence conflict" description="In Ref. 1 and 2." evidence="8" ref="1 2">
    <original>F</original>
    <variation>S</variation>
    <location>
        <position position="57"/>
    </location>
</feature>
<feature type="sequence conflict" description="In Ref. 1 and 2." evidence="8" ref="1 2">
    <original>P</original>
    <variation>S</variation>
    <location>
        <position position="77"/>
    </location>
</feature>
<feature type="sequence conflict" description="In Ref. 1 and 2." evidence="8" ref="1 2">
    <original>K</original>
    <variation>I</variation>
    <location>
        <position position="133"/>
    </location>
</feature>
<feature type="sequence conflict" description="In Ref. 1 and 2." evidence="8" ref="1 2">
    <original>R</original>
    <variation>M</variation>
    <location>
        <position position="153"/>
    </location>
</feature>
<name>GGPP6_ARATH</name>
<comment type="function">
    <text evidence="6">Catalyzes the trans-addition of the three molecules of IPP onto DMAPP to form geranylgeranyl pyrophosphate.</text>
</comment>
<comment type="catalytic activity">
    <reaction>
        <text>isopentenyl diphosphate + dimethylallyl diphosphate = (2E)-geranyl diphosphate + diphosphate</text>
        <dbReference type="Rhea" id="RHEA:22408"/>
        <dbReference type="ChEBI" id="CHEBI:33019"/>
        <dbReference type="ChEBI" id="CHEBI:57623"/>
        <dbReference type="ChEBI" id="CHEBI:58057"/>
        <dbReference type="ChEBI" id="CHEBI:128769"/>
        <dbReference type="EC" id="2.5.1.1"/>
    </reaction>
</comment>
<comment type="catalytic activity">
    <reaction>
        <text>isopentenyl diphosphate + (2E)-geranyl diphosphate = (2E,6E)-farnesyl diphosphate + diphosphate</text>
        <dbReference type="Rhea" id="RHEA:19361"/>
        <dbReference type="ChEBI" id="CHEBI:33019"/>
        <dbReference type="ChEBI" id="CHEBI:58057"/>
        <dbReference type="ChEBI" id="CHEBI:128769"/>
        <dbReference type="ChEBI" id="CHEBI:175763"/>
        <dbReference type="EC" id="2.5.1.10"/>
    </reaction>
</comment>
<comment type="catalytic activity">
    <reaction evidence="6">
        <text>isopentenyl diphosphate + (2E,6E)-farnesyl diphosphate = (2E,6E,10E)-geranylgeranyl diphosphate + diphosphate</text>
        <dbReference type="Rhea" id="RHEA:17653"/>
        <dbReference type="ChEBI" id="CHEBI:33019"/>
        <dbReference type="ChEBI" id="CHEBI:58756"/>
        <dbReference type="ChEBI" id="CHEBI:128769"/>
        <dbReference type="ChEBI" id="CHEBI:175763"/>
        <dbReference type="EC" id="2.5.1.29"/>
    </reaction>
    <physiologicalReaction direction="left-to-right" evidence="6">
        <dbReference type="Rhea" id="RHEA:17654"/>
    </physiologicalReaction>
</comment>
<comment type="cofactor">
    <cofactor evidence="2">
        <name>Mg(2+)</name>
        <dbReference type="ChEBI" id="CHEBI:18420"/>
    </cofactor>
    <text evidence="2">Binds 2 Mg(2+) ions per subunit.</text>
</comment>
<comment type="pathway">
    <text>Isoprenoid biosynthesis; farnesyl diphosphate biosynthesis; farnesyl diphosphate from geranyl diphosphate and isopentenyl diphosphate: step 1/1.</text>
</comment>
<comment type="pathway">
    <text>Isoprenoid biosynthesis; geranyl diphosphate biosynthesis; geranyl diphosphate from dimethylallyl diphosphate and isopentenyl diphosphate: step 1/1.</text>
</comment>
<comment type="pathway">
    <text>Isoprenoid biosynthesis; geranylgeranyl diphosphate biosynthesis; geranylgeranyl diphosphate from farnesyl diphosphate and isopentenyl diphosphate: step 1/1.</text>
</comment>
<comment type="subunit">
    <text evidence="1">Monomer.</text>
</comment>
<comment type="subcellular location">
    <subcellularLocation>
        <location evidence="5 6">Mitochondrion</location>
    </subcellularLocation>
</comment>
<comment type="similarity">
    <text evidence="8">Belongs to the FPP/GGPP synthase family.</text>
</comment>
<gene>
    <name evidence="8" type="primary">GGPP6</name>
    <name evidence="9" type="ordered locus">At1g49530</name>
    <name evidence="10" type="ORF">F13F21.3</name>
</gene>
<reference key="1">
    <citation type="journal article" date="1997" name="Plant Mol. Biol.">
        <title>Geranylgeranyl pyrophosphate synthase encoded by the newly isolated gene GGPS6 from Arabidopsis thaliana is localized in mitochondria.</title>
        <authorList>
            <person name="Zhu X."/>
            <person name="Suzuki K."/>
            <person name="Saito T."/>
            <person name="Okada K."/>
            <person name="Tanaka K."/>
            <person name="Nakagawa T."/>
            <person name="Matsuda H."/>
            <person name="Kawamukai M."/>
        </authorList>
    </citation>
    <scope>NUCLEOTIDE SEQUENCE [MRNA]</scope>
    <scope>FUNCTION</scope>
    <scope>CATALYTIC ACTIVITY</scope>
    <scope>SUBCELLULAR LOCATION</scope>
    <source>
        <strain>cv. Landsberg erecta</strain>
    </source>
</reference>
<reference key="2">
    <citation type="journal article" date="2000" name="Plant Physiol.">
        <title>Five geranylgeranyl diphosphate synthases expressed in different organs are localized into three subcellular compartments in Arabidopsis.</title>
        <authorList>
            <person name="Okada K."/>
            <person name="Saito T."/>
            <person name="Nakagawa T."/>
            <person name="Kawamukai M."/>
            <person name="Kamiya Y."/>
        </authorList>
    </citation>
    <scope>NUCLEOTIDE SEQUENCE [MRNA]</scope>
    <scope>SUBCELLULAR LOCATION</scope>
</reference>
<reference key="3">
    <citation type="journal article" date="2000" name="Nature">
        <title>Sequence and analysis of chromosome 1 of the plant Arabidopsis thaliana.</title>
        <authorList>
            <person name="Theologis A."/>
            <person name="Ecker J.R."/>
            <person name="Palm C.J."/>
            <person name="Federspiel N.A."/>
            <person name="Kaul S."/>
            <person name="White O."/>
            <person name="Alonso J."/>
            <person name="Altafi H."/>
            <person name="Araujo R."/>
            <person name="Bowman C.L."/>
            <person name="Brooks S.Y."/>
            <person name="Buehler E."/>
            <person name="Chan A."/>
            <person name="Chao Q."/>
            <person name="Chen H."/>
            <person name="Cheuk R.F."/>
            <person name="Chin C.W."/>
            <person name="Chung M.K."/>
            <person name="Conn L."/>
            <person name="Conway A.B."/>
            <person name="Conway A.R."/>
            <person name="Creasy T.H."/>
            <person name="Dewar K."/>
            <person name="Dunn P."/>
            <person name="Etgu P."/>
            <person name="Feldblyum T.V."/>
            <person name="Feng J.-D."/>
            <person name="Fong B."/>
            <person name="Fujii C.Y."/>
            <person name="Gill J.E."/>
            <person name="Goldsmith A.D."/>
            <person name="Haas B."/>
            <person name="Hansen N.F."/>
            <person name="Hughes B."/>
            <person name="Huizar L."/>
            <person name="Hunter J.L."/>
            <person name="Jenkins J."/>
            <person name="Johnson-Hopson C."/>
            <person name="Khan S."/>
            <person name="Khaykin E."/>
            <person name="Kim C.J."/>
            <person name="Koo H.L."/>
            <person name="Kremenetskaia I."/>
            <person name="Kurtz D.B."/>
            <person name="Kwan A."/>
            <person name="Lam B."/>
            <person name="Langin-Hooper S."/>
            <person name="Lee A."/>
            <person name="Lee J.M."/>
            <person name="Lenz C.A."/>
            <person name="Li J.H."/>
            <person name="Li Y.-P."/>
            <person name="Lin X."/>
            <person name="Liu S.X."/>
            <person name="Liu Z.A."/>
            <person name="Luros J.S."/>
            <person name="Maiti R."/>
            <person name="Marziali A."/>
            <person name="Militscher J."/>
            <person name="Miranda M."/>
            <person name="Nguyen M."/>
            <person name="Nierman W.C."/>
            <person name="Osborne B.I."/>
            <person name="Pai G."/>
            <person name="Peterson J."/>
            <person name="Pham P.K."/>
            <person name="Rizzo M."/>
            <person name="Rooney T."/>
            <person name="Rowley D."/>
            <person name="Sakano H."/>
            <person name="Salzberg S.L."/>
            <person name="Schwartz J.R."/>
            <person name="Shinn P."/>
            <person name="Southwick A.M."/>
            <person name="Sun H."/>
            <person name="Tallon L.J."/>
            <person name="Tambunga G."/>
            <person name="Toriumi M.J."/>
            <person name="Town C.D."/>
            <person name="Utterback T."/>
            <person name="Van Aken S."/>
            <person name="Vaysberg M."/>
            <person name="Vysotskaia V.S."/>
            <person name="Walker M."/>
            <person name="Wu D."/>
            <person name="Yu G."/>
            <person name="Fraser C.M."/>
            <person name="Venter J.C."/>
            <person name="Davis R.W."/>
        </authorList>
    </citation>
    <scope>NUCLEOTIDE SEQUENCE [LARGE SCALE GENOMIC DNA]</scope>
    <source>
        <strain>cv. Columbia</strain>
    </source>
</reference>
<reference key="4">
    <citation type="journal article" date="2017" name="Plant J.">
        <title>Araport11: a complete reannotation of the Arabidopsis thaliana reference genome.</title>
        <authorList>
            <person name="Cheng C.Y."/>
            <person name="Krishnakumar V."/>
            <person name="Chan A.P."/>
            <person name="Thibaud-Nissen F."/>
            <person name="Schobel S."/>
            <person name="Town C.D."/>
        </authorList>
    </citation>
    <scope>GENOME REANNOTATION</scope>
    <source>
        <strain>cv. Columbia</strain>
    </source>
</reference>
<reference key="5">
    <citation type="submission" date="2004-03" db="EMBL/GenBank/DDBJ databases">
        <authorList>
            <person name="Kim C.J."/>
            <person name="Chen H."/>
            <person name="Cheuk R.F."/>
            <person name="Shinn P."/>
            <person name="Ecker J.R."/>
        </authorList>
    </citation>
    <scope>NUCLEOTIDE SEQUENCE [MRNA]</scope>
</reference>
<proteinExistence type="evidence at protein level"/>